<sequence length="355" mass="39011">MKLEVNLKQNPYDIIIEKGALKGVGQWVKSLWEPQKIALITDNHVGGLYAEKVKLSLEHEGFEVVVFNFLEGEASKNLKTVNKAYEFLIKNGMTRSDGIVALGGGVVGDLAGFVASTYMRGIHFVQVPTSLTAQVDSSIGGKTGVNTPSAKNIVGTFAQPDGVLIDPNVLETLGKRELIEGMGEVVKYGLIDDPELWQLLDNIDGSVHSILENSETIIYRSCNVKRKIVVEDEFEGGVRMYLNFGHTIGHAVEQTAGYGKVMHGEAVAIGMVQISRVAEKKNLMPQGITRQIAEMCVKFGLPVDYEPWRVEELYTALTHDKKARGNSIKTVIVPEIGKAAINQIPLVEMKEYLEK</sequence>
<dbReference type="EC" id="4.2.3.4" evidence="1"/>
<dbReference type="EMBL" id="CP000419">
    <property type="protein sequence ID" value="ABJ65948.1"/>
    <property type="molecule type" value="Genomic_DNA"/>
</dbReference>
<dbReference type="RefSeq" id="WP_011680944.1">
    <property type="nucleotide sequence ID" value="NC_008532.1"/>
</dbReference>
<dbReference type="SMR" id="Q03LH4"/>
<dbReference type="KEGG" id="ste:STER_0690"/>
<dbReference type="HOGENOM" id="CLU_001201_0_2_9"/>
<dbReference type="UniPathway" id="UPA00053">
    <property type="reaction ID" value="UER00085"/>
</dbReference>
<dbReference type="GO" id="GO:0005737">
    <property type="term" value="C:cytoplasm"/>
    <property type="evidence" value="ECO:0007669"/>
    <property type="project" value="UniProtKB-SubCell"/>
</dbReference>
<dbReference type="GO" id="GO:0003856">
    <property type="term" value="F:3-dehydroquinate synthase activity"/>
    <property type="evidence" value="ECO:0007669"/>
    <property type="project" value="UniProtKB-UniRule"/>
</dbReference>
<dbReference type="GO" id="GO:0046872">
    <property type="term" value="F:metal ion binding"/>
    <property type="evidence" value="ECO:0007669"/>
    <property type="project" value="UniProtKB-KW"/>
</dbReference>
<dbReference type="GO" id="GO:0000166">
    <property type="term" value="F:nucleotide binding"/>
    <property type="evidence" value="ECO:0007669"/>
    <property type="project" value="UniProtKB-KW"/>
</dbReference>
<dbReference type="GO" id="GO:0008652">
    <property type="term" value="P:amino acid biosynthetic process"/>
    <property type="evidence" value="ECO:0007669"/>
    <property type="project" value="UniProtKB-KW"/>
</dbReference>
<dbReference type="GO" id="GO:0009073">
    <property type="term" value="P:aromatic amino acid family biosynthetic process"/>
    <property type="evidence" value="ECO:0007669"/>
    <property type="project" value="UniProtKB-KW"/>
</dbReference>
<dbReference type="GO" id="GO:0009423">
    <property type="term" value="P:chorismate biosynthetic process"/>
    <property type="evidence" value="ECO:0007669"/>
    <property type="project" value="UniProtKB-UniRule"/>
</dbReference>
<dbReference type="CDD" id="cd08195">
    <property type="entry name" value="DHQS"/>
    <property type="match status" value="1"/>
</dbReference>
<dbReference type="FunFam" id="3.40.50.1970:FF:000001">
    <property type="entry name" value="3-dehydroquinate synthase"/>
    <property type="match status" value="1"/>
</dbReference>
<dbReference type="Gene3D" id="3.40.50.1970">
    <property type="match status" value="1"/>
</dbReference>
<dbReference type="Gene3D" id="1.20.1090.10">
    <property type="entry name" value="Dehydroquinate synthase-like - alpha domain"/>
    <property type="match status" value="1"/>
</dbReference>
<dbReference type="HAMAP" id="MF_00110">
    <property type="entry name" value="DHQ_synthase"/>
    <property type="match status" value="1"/>
</dbReference>
<dbReference type="InterPro" id="IPR050071">
    <property type="entry name" value="Dehydroquinate_synthase"/>
</dbReference>
<dbReference type="InterPro" id="IPR016037">
    <property type="entry name" value="DHQ_synth_AroB"/>
</dbReference>
<dbReference type="InterPro" id="IPR030963">
    <property type="entry name" value="DHQ_synth_fam"/>
</dbReference>
<dbReference type="InterPro" id="IPR030960">
    <property type="entry name" value="DHQS/DOIS_N"/>
</dbReference>
<dbReference type="InterPro" id="IPR056179">
    <property type="entry name" value="DHQS_C"/>
</dbReference>
<dbReference type="NCBIfam" id="TIGR01357">
    <property type="entry name" value="aroB"/>
    <property type="match status" value="1"/>
</dbReference>
<dbReference type="PANTHER" id="PTHR43622">
    <property type="entry name" value="3-DEHYDROQUINATE SYNTHASE"/>
    <property type="match status" value="1"/>
</dbReference>
<dbReference type="PANTHER" id="PTHR43622:SF7">
    <property type="entry name" value="3-DEHYDROQUINATE SYNTHASE, CHLOROPLASTIC"/>
    <property type="match status" value="1"/>
</dbReference>
<dbReference type="Pfam" id="PF01761">
    <property type="entry name" value="DHQ_synthase"/>
    <property type="match status" value="1"/>
</dbReference>
<dbReference type="Pfam" id="PF24621">
    <property type="entry name" value="DHQS_C"/>
    <property type="match status" value="1"/>
</dbReference>
<dbReference type="PIRSF" id="PIRSF001455">
    <property type="entry name" value="DHQ_synth"/>
    <property type="match status" value="1"/>
</dbReference>
<dbReference type="SUPFAM" id="SSF56796">
    <property type="entry name" value="Dehydroquinate synthase-like"/>
    <property type="match status" value="1"/>
</dbReference>
<feature type="chain" id="PRO_1000094643" description="3-dehydroquinate synthase">
    <location>
        <begin position="1"/>
        <end position="355"/>
    </location>
</feature>
<feature type="binding site" evidence="1">
    <location>
        <begin position="71"/>
        <end position="76"/>
    </location>
    <ligand>
        <name>NAD(+)</name>
        <dbReference type="ChEBI" id="CHEBI:57540"/>
    </ligand>
</feature>
<feature type="binding site" evidence="1">
    <location>
        <begin position="105"/>
        <end position="109"/>
    </location>
    <ligand>
        <name>NAD(+)</name>
        <dbReference type="ChEBI" id="CHEBI:57540"/>
    </ligand>
</feature>
<feature type="binding site" evidence="1">
    <location>
        <begin position="129"/>
        <end position="130"/>
    </location>
    <ligand>
        <name>NAD(+)</name>
        <dbReference type="ChEBI" id="CHEBI:57540"/>
    </ligand>
</feature>
<feature type="binding site" evidence="1">
    <location>
        <position position="142"/>
    </location>
    <ligand>
        <name>NAD(+)</name>
        <dbReference type="ChEBI" id="CHEBI:57540"/>
    </ligand>
</feature>
<feature type="binding site" evidence="1">
    <location>
        <position position="151"/>
    </location>
    <ligand>
        <name>NAD(+)</name>
        <dbReference type="ChEBI" id="CHEBI:57540"/>
    </ligand>
</feature>
<feature type="binding site" evidence="1">
    <location>
        <position position="184"/>
    </location>
    <ligand>
        <name>Zn(2+)</name>
        <dbReference type="ChEBI" id="CHEBI:29105"/>
    </ligand>
</feature>
<feature type="binding site" evidence="1">
    <location>
        <position position="246"/>
    </location>
    <ligand>
        <name>Zn(2+)</name>
        <dbReference type="ChEBI" id="CHEBI:29105"/>
    </ligand>
</feature>
<feature type="binding site" evidence="1">
    <location>
        <position position="263"/>
    </location>
    <ligand>
        <name>Zn(2+)</name>
        <dbReference type="ChEBI" id="CHEBI:29105"/>
    </ligand>
</feature>
<name>AROB_STRTD</name>
<accession>Q03LH4</accession>
<reference key="1">
    <citation type="journal article" date="2006" name="Proc. Natl. Acad. Sci. U.S.A.">
        <title>Comparative genomics of the lactic acid bacteria.</title>
        <authorList>
            <person name="Makarova K.S."/>
            <person name="Slesarev A."/>
            <person name="Wolf Y.I."/>
            <person name="Sorokin A."/>
            <person name="Mirkin B."/>
            <person name="Koonin E.V."/>
            <person name="Pavlov A."/>
            <person name="Pavlova N."/>
            <person name="Karamychev V."/>
            <person name="Polouchine N."/>
            <person name="Shakhova V."/>
            <person name="Grigoriev I."/>
            <person name="Lou Y."/>
            <person name="Rohksar D."/>
            <person name="Lucas S."/>
            <person name="Huang K."/>
            <person name="Goodstein D.M."/>
            <person name="Hawkins T."/>
            <person name="Plengvidhya V."/>
            <person name="Welker D."/>
            <person name="Hughes J."/>
            <person name="Goh Y."/>
            <person name="Benson A."/>
            <person name="Baldwin K."/>
            <person name="Lee J.-H."/>
            <person name="Diaz-Muniz I."/>
            <person name="Dosti B."/>
            <person name="Smeianov V."/>
            <person name="Wechter W."/>
            <person name="Barabote R."/>
            <person name="Lorca G."/>
            <person name="Altermann E."/>
            <person name="Barrangou R."/>
            <person name="Ganesan B."/>
            <person name="Xie Y."/>
            <person name="Rawsthorne H."/>
            <person name="Tamir D."/>
            <person name="Parker C."/>
            <person name="Breidt F."/>
            <person name="Broadbent J.R."/>
            <person name="Hutkins R."/>
            <person name="O'Sullivan D."/>
            <person name="Steele J."/>
            <person name="Unlu G."/>
            <person name="Saier M.H. Jr."/>
            <person name="Klaenhammer T."/>
            <person name="Richardson P."/>
            <person name="Kozyavkin S."/>
            <person name="Weimer B.C."/>
            <person name="Mills D.A."/>
        </authorList>
    </citation>
    <scope>NUCLEOTIDE SEQUENCE [LARGE SCALE GENOMIC DNA]</scope>
    <source>
        <strain>ATCC BAA-491 / LMD-9</strain>
    </source>
</reference>
<gene>
    <name evidence="1" type="primary">aroB</name>
    <name type="ordered locus">STER_0690</name>
</gene>
<proteinExistence type="inferred from homology"/>
<organism>
    <name type="scientific">Streptococcus thermophilus (strain ATCC BAA-491 / LMD-9)</name>
    <dbReference type="NCBI Taxonomy" id="322159"/>
    <lineage>
        <taxon>Bacteria</taxon>
        <taxon>Bacillati</taxon>
        <taxon>Bacillota</taxon>
        <taxon>Bacilli</taxon>
        <taxon>Lactobacillales</taxon>
        <taxon>Streptococcaceae</taxon>
        <taxon>Streptococcus</taxon>
    </lineage>
</organism>
<keyword id="KW-0028">Amino-acid biosynthesis</keyword>
<keyword id="KW-0057">Aromatic amino acid biosynthesis</keyword>
<keyword id="KW-0170">Cobalt</keyword>
<keyword id="KW-0963">Cytoplasm</keyword>
<keyword id="KW-0456">Lyase</keyword>
<keyword id="KW-0479">Metal-binding</keyword>
<keyword id="KW-0520">NAD</keyword>
<keyword id="KW-0547">Nucleotide-binding</keyword>
<keyword id="KW-0862">Zinc</keyword>
<protein>
    <recommendedName>
        <fullName evidence="1">3-dehydroquinate synthase</fullName>
        <shortName evidence="1">DHQS</shortName>
        <ecNumber evidence="1">4.2.3.4</ecNumber>
    </recommendedName>
</protein>
<comment type="function">
    <text evidence="1">Catalyzes the conversion of 3-deoxy-D-arabino-heptulosonate 7-phosphate (DAHP) to dehydroquinate (DHQ).</text>
</comment>
<comment type="catalytic activity">
    <reaction evidence="1">
        <text>7-phospho-2-dehydro-3-deoxy-D-arabino-heptonate = 3-dehydroquinate + phosphate</text>
        <dbReference type="Rhea" id="RHEA:21968"/>
        <dbReference type="ChEBI" id="CHEBI:32364"/>
        <dbReference type="ChEBI" id="CHEBI:43474"/>
        <dbReference type="ChEBI" id="CHEBI:58394"/>
        <dbReference type="EC" id="4.2.3.4"/>
    </reaction>
</comment>
<comment type="cofactor">
    <cofactor evidence="1">
        <name>Co(2+)</name>
        <dbReference type="ChEBI" id="CHEBI:48828"/>
    </cofactor>
    <cofactor evidence="1">
        <name>Zn(2+)</name>
        <dbReference type="ChEBI" id="CHEBI:29105"/>
    </cofactor>
    <text evidence="1">Binds 1 divalent metal cation per subunit. Can use either Co(2+) or Zn(2+).</text>
</comment>
<comment type="cofactor">
    <cofactor evidence="1">
        <name>NAD(+)</name>
        <dbReference type="ChEBI" id="CHEBI:57540"/>
    </cofactor>
</comment>
<comment type="pathway">
    <text evidence="1">Metabolic intermediate biosynthesis; chorismate biosynthesis; chorismate from D-erythrose 4-phosphate and phosphoenolpyruvate: step 2/7.</text>
</comment>
<comment type="subcellular location">
    <subcellularLocation>
        <location evidence="1">Cytoplasm</location>
    </subcellularLocation>
</comment>
<comment type="similarity">
    <text evidence="1">Belongs to the sugar phosphate cyclases superfamily. Dehydroquinate synthase family.</text>
</comment>
<evidence type="ECO:0000255" key="1">
    <source>
        <dbReference type="HAMAP-Rule" id="MF_00110"/>
    </source>
</evidence>